<proteinExistence type="inferred from homology"/>
<organism>
    <name type="scientific">Pseudoalteromonas translucida (strain TAC 125)</name>
    <dbReference type="NCBI Taxonomy" id="326442"/>
    <lineage>
        <taxon>Bacteria</taxon>
        <taxon>Pseudomonadati</taxon>
        <taxon>Pseudomonadota</taxon>
        <taxon>Gammaproteobacteria</taxon>
        <taxon>Alteromonadales</taxon>
        <taxon>Pseudoalteromonadaceae</taxon>
        <taxon>Pseudoalteromonas</taxon>
    </lineage>
</organism>
<keyword id="KW-1185">Reference proteome</keyword>
<keyword id="KW-0687">Ribonucleoprotein</keyword>
<keyword id="KW-0689">Ribosomal protein</keyword>
<feature type="chain" id="PRO_1000013410" description="Large ribosomal subunit protein bL34">
    <location>
        <begin position="1"/>
        <end position="44"/>
    </location>
</feature>
<evidence type="ECO:0000255" key="1">
    <source>
        <dbReference type="HAMAP-Rule" id="MF_00391"/>
    </source>
</evidence>
<evidence type="ECO:0000305" key="2"/>
<gene>
    <name evidence="1" type="primary">rpmH</name>
    <name type="ordered locus">PSHAa3026</name>
</gene>
<accession>Q3IK51</accession>
<name>RL34_PSET1</name>
<sequence length="44" mass="5092">MKRTFQPSVLKRKRAHGFRARMATVNGRKVLARRRAKGRKVLSA</sequence>
<reference key="1">
    <citation type="journal article" date="2005" name="Genome Res.">
        <title>Coping with cold: the genome of the versatile marine Antarctica bacterium Pseudoalteromonas haloplanktis TAC125.</title>
        <authorList>
            <person name="Medigue C."/>
            <person name="Krin E."/>
            <person name="Pascal G."/>
            <person name="Barbe V."/>
            <person name="Bernsel A."/>
            <person name="Bertin P.N."/>
            <person name="Cheung F."/>
            <person name="Cruveiller S."/>
            <person name="D'Amico S."/>
            <person name="Duilio A."/>
            <person name="Fang G."/>
            <person name="Feller G."/>
            <person name="Ho C."/>
            <person name="Mangenot S."/>
            <person name="Marino G."/>
            <person name="Nilsson J."/>
            <person name="Parrilli E."/>
            <person name="Rocha E.P.C."/>
            <person name="Rouy Z."/>
            <person name="Sekowska A."/>
            <person name="Tutino M.L."/>
            <person name="Vallenet D."/>
            <person name="von Heijne G."/>
            <person name="Danchin A."/>
        </authorList>
    </citation>
    <scope>NUCLEOTIDE SEQUENCE [LARGE SCALE GENOMIC DNA]</scope>
    <source>
        <strain>TAC 125</strain>
    </source>
</reference>
<dbReference type="EMBL" id="CR954246">
    <property type="protein sequence ID" value="CAI88055.1"/>
    <property type="molecule type" value="Genomic_DNA"/>
</dbReference>
<dbReference type="SMR" id="Q3IK51"/>
<dbReference type="STRING" id="326442.PSHAa3026"/>
<dbReference type="KEGG" id="pha:PSHAa3026"/>
<dbReference type="eggNOG" id="COG0230">
    <property type="taxonomic scope" value="Bacteria"/>
</dbReference>
<dbReference type="HOGENOM" id="CLU_129938_2_0_6"/>
<dbReference type="BioCyc" id="PHAL326442:PSHA_RS14845-MONOMER"/>
<dbReference type="Proteomes" id="UP000006843">
    <property type="component" value="Chromosome I"/>
</dbReference>
<dbReference type="GO" id="GO:1990904">
    <property type="term" value="C:ribonucleoprotein complex"/>
    <property type="evidence" value="ECO:0007669"/>
    <property type="project" value="UniProtKB-KW"/>
</dbReference>
<dbReference type="GO" id="GO:0005840">
    <property type="term" value="C:ribosome"/>
    <property type="evidence" value="ECO:0007669"/>
    <property type="project" value="UniProtKB-KW"/>
</dbReference>
<dbReference type="GO" id="GO:0003735">
    <property type="term" value="F:structural constituent of ribosome"/>
    <property type="evidence" value="ECO:0007669"/>
    <property type="project" value="InterPro"/>
</dbReference>
<dbReference type="GO" id="GO:0006412">
    <property type="term" value="P:translation"/>
    <property type="evidence" value="ECO:0007669"/>
    <property type="project" value="UniProtKB-UniRule"/>
</dbReference>
<dbReference type="FunFam" id="1.10.287.3980:FF:000001">
    <property type="entry name" value="Mitochondrial ribosomal protein L34"/>
    <property type="match status" value="1"/>
</dbReference>
<dbReference type="Gene3D" id="1.10.287.3980">
    <property type="match status" value="1"/>
</dbReference>
<dbReference type="HAMAP" id="MF_00391">
    <property type="entry name" value="Ribosomal_bL34"/>
    <property type="match status" value="1"/>
</dbReference>
<dbReference type="InterPro" id="IPR000271">
    <property type="entry name" value="Ribosomal_bL34"/>
</dbReference>
<dbReference type="InterPro" id="IPR020939">
    <property type="entry name" value="Ribosomal_bL34_CS"/>
</dbReference>
<dbReference type="NCBIfam" id="TIGR01030">
    <property type="entry name" value="rpmH_bact"/>
    <property type="match status" value="1"/>
</dbReference>
<dbReference type="PANTHER" id="PTHR14503:SF4">
    <property type="entry name" value="LARGE RIBOSOMAL SUBUNIT PROTEIN BL34M"/>
    <property type="match status" value="1"/>
</dbReference>
<dbReference type="PANTHER" id="PTHR14503">
    <property type="entry name" value="MITOCHONDRIAL RIBOSOMAL PROTEIN 34 FAMILY MEMBER"/>
    <property type="match status" value="1"/>
</dbReference>
<dbReference type="Pfam" id="PF00468">
    <property type="entry name" value="Ribosomal_L34"/>
    <property type="match status" value="1"/>
</dbReference>
<dbReference type="PROSITE" id="PS00784">
    <property type="entry name" value="RIBOSOMAL_L34"/>
    <property type="match status" value="1"/>
</dbReference>
<comment type="similarity">
    <text evidence="1">Belongs to the bacterial ribosomal protein bL34 family.</text>
</comment>
<protein>
    <recommendedName>
        <fullName evidence="1">Large ribosomal subunit protein bL34</fullName>
    </recommendedName>
    <alternativeName>
        <fullName evidence="2">50S ribosomal protein L34</fullName>
    </alternativeName>
</protein>